<name>RLR11_PLAHL</name>
<organism>
    <name type="scientific">Plasmopara halstedii</name>
    <name type="common">Downy mildew of sunflower</name>
    <dbReference type="NCBI Taxonomy" id="4781"/>
    <lineage>
        <taxon>Eukaryota</taxon>
        <taxon>Sar</taxon>
        <taxon>Stramenopiles</taxon>
        <taxon>Oomycota</taxon>
        <taxon>Peronosporales</taxon>
        <taxon>Peronosporaceae</taxon>
        <taxon>Plasmopara</taxon>
    </lineage>
</organism>
<feature type="signal peptide" evidence="1">
    <location>
        <begin position="1"/>
        <end position="19"/>
    </location>
</feature>
<feature type="chain" id="PRO_5006058918" description="Secreted RxLR effector protein RXLR-C11">
    <location>
        <begin position="20"/>
        <end position="160"/>
    </location>
</feature>
<feature type="short sequence motif" description="RxLR-dEER" evidence="5">
    <location>
        <begin position="58"/>
        <end position="75"/>
    </location>
</feature>
<accession>A0A0P1ATM7</accession>
<dbReference type="EMBL" id="CCYD01001204">
    <property type="protein sequence ID" value="CEG44407.1"/>
    <property type="molecule type" value="Genomic_DNA"/>
</dbReference>
<dbReference type="EnsemblProtists" id="CEG44407">
    <property type="protein sequence ID" value="CEG44407"/>
    <property type="gene ID" value="CEG44407"/>
</dbReference>
<dbReference type="Proteomes" id="UP000054928">
    <property type="component" value="Unassembled WGS sequence"/>
</dbReference>
<dbReference type="GO" id="GO:0005576">
    <property type="term" value="C:extracellular region"/>
    <property type="evidence" value="ECO:0007669"/>
    <property type="project" value="UniProtKB-SubCell"/>
</dbReference>
<dbReference type="GO" id="GO:0042025">
    <property type="term" value="C:host cell nucleus"/>
    <property type="evidence" value="ECO:0007669"/>
    <property type="project" value="UniProtKB-SubCell"/>
</dbReference>
<dbReference type="GO" id="GO:0020002">
    <property type="term" value="C:host cell plasma membrane"/>
    <property type="evidence" value="ECO:0007669"/>
    <property type="project" value="UniProtKB-SubCell"/>
</dbReference>
<dbReference type="GO" id="GO:0016020">
    <property type="term" value="C:membrane"/>
    <property type="evidence" value="ECO:0007669"/>
    <property type="project" value="UniProtKB-KW"/>
</dbReference>
<dbReference type="InterPro" id="IPR031825">
    <property type="entry name" value="RXLR"/>
</dbReference>
<dbReference type="Pfam" id="PF16810">
    <property type="entry name" value="RXLR"/>
    <property type="match status" value="1"/>
</dbReference>
<evidence type="ECO:0000255" key="1"/>
<evidence type="ECO:0000269" key="2">
    <source>
    </source>
</evidence>
<evidence type="ECO:0000303" key="3">
    <source>
    </source>
</evidence>
<evidence type="ECO:0000305" key="4"/>
<evidence type="ECO:0000305" key="5">
    <source>
    </source>
</evidence>
<sequence>MHFSLVLLVFAAIVIPICADTSTTKDYDDKKSLQTSNFGTAAVANMLHVLQSSDNSKRLLRMNDKAVISDHEEERSSLVKNKQKKLSYRIKKGWENVKKPFKKSAKIIEKPLKKGSKIIIEPFKKVSKIIKKFAIKGAKIVKKPFKKSARIIKKSFKNLN</sequence>
<keyword id="KW-1032">Host cell membrane</keyword>
<keyword id="KW-1043">Host membrane</keyword>
<keyword id="KW-1048">Host nucleus</keyword>
<keyword id="KW-0472">Membrane</keyword>
<keyword id="KW-1185">Reference proteome</keyword>
<keyword id="KW-0964">Secreted</keyword>
<keyword id="KW-0732">Signal</keyword>
<keyword id="KW-0843">Virulence</keyword>
<gene>
    <name evidence="3" type="primary">RXLR-C11</name>
</gene>
<comment type="function">
    <text evidence="2">Secreted effector that suppresses pattern-triggered immunity (PTI) in plant host.</text>
</comment>
<comment type="subcellular location">
    <subcellularLocation>
        <location evidence="2">Secreted</location>
    </subcellularLocation>
    <subcellularLocation>
        <location evidence="2">Host cell membrane</location>
    </subcellularLocation>
    <subcellularLocation>
        <location evidence="2">Host nucleus</location>
    </subcellularLocation>
</comment>
<comment type="induction">
    <text evidence="2">Expression is up-regulated in spores.</text>
</comment>
<comment type="domain">
    <text evidence="5">The RxLR-dEER motif acts to carry the protein into the host cell cytoplasm through binding to cell surface phosphatidylinositol-3-phosphate.</text>
</comment>
<comment type="similarity">
    <text evidence="4">Belongs to the RxLR effector family.</text>
</comment>
<protein>
    <recommendedName>
        <fullName evidence="3">Secreted RxLR effector protein RXLR-C11</fullName>
    </recommendedName>
</protein>
<reference key="1">
    <citation type="journal article" date="2015" name="BMC Genomics">
        <title>Genome analyses of the sunflower pathogen Plasmopara halstedii provide insights into effector evolution in downy mildews and Phytophthora.</title>
        <authorList>
            <person name="Sharma R."/>
            <person name="Xia X."/>
            <person name="Cano L.M."/>
            <person name="Evangelisti E."/>
            <person name="Kemen E."/>
            <person name="Judelson H."/>
            <person name="Oome S."/>
            <person name="Sambles C."/>
            <person name="van den Hoogen D.J."/>
            <person name="Kitner M."/>
            <person name="Klein J."/>
            <person name="Meijer H.J."/>
            <person name="Spring O."/>
            <person name="Win J."/>
            <person name="Zipper R."/>
            <person name="Bode H.B."/>
            <person name="Govers F."/>
            <person name="Kamoun S."/>
            <person name="Schornack S."/>
            <person name="Studholme D.J."/>
            <person name="Van den Ackerveken G."/>
            <person name="Thines M."/>
        </authorList>
    </citation>
    <scope>NUCLEOTIDE SEQUENCE [LARGE SCALE GENOMIC DNA]</scope>
</reference>
<reference key="2">
    <citation type="journal article" date="2019" name="Plant J.">
        <title>Sunflower resistance to multiple downy mildew pathotypes revealed by recognition of conserved effectors of the oomycete Plasmopara halstedii.</title>
        <authorList>
            <person name="Pecrix Y."/>
            <person name="Buendia L."/>
            <person name="Penouilh-Suzette C."/>
            <person name="Marechaux M."/>
            <person name="Legrand L."/>
            <person name="Bouchez O."/>
            <person name="Rengel D."/>
            <person name="Gouzy J."/>
            <person name="Cottret L."/>
            <person name="Vear F."/>
            <person name="Godiard L."/>
        </authorList>
    </citation>
    <scope>DOMAIN</scope>
    <scope>INDUCTION</scope>
    <scope>FUNCTION</scope>
    <scope>SUBCELLULAR LOCATION</scope>
</reference>
<proteinExistence type="evidence at transcript level"/>